<protein>
    <recommendedName>
        <fullName evidence="1">LPS-assembly lipoprotein LptE</fullName>
    </recommendedName>
</protein>
<comment type="function">
    <text evidence="1">Together with LptD, is involved in the assembly of lipopolysaccharide (LPS) at the surface of the outer membrane. Required for the proper assembly of LptD. Binds LPS and may serve as the LPS recognition site at the outer membrane.</text>
</comment>
<comment type="subunit">
    <text evidence="1">Component of the lipopolysaccharide transport and assembly complex. Interacts with LptD.</text>
</comment>
<comment type="subcellular location">
    <subcellularLocation>
        <location evidence="1">Cell outer membrane</location>
        <topology evidence="1">Lipid-anchor</topology>
    </subcellularLocation>
</comment>
<comment type="similarity">
    <text evidence="1">Belongs to the LptE lipoprotein family.</text>
</comment>
<accession>A1A8R6</accession>
<keyword id="KW-0998">Cell outer membrane</keyword>
<keyword id="KW-0449">Lipoprotein</keyword>
<keyword id="KW-0472">Membrane</keyword>
<keyword id="KW-0564">Palmitate</keyword>
<keyword id="KW-1185">Reference proteome</keyword>
<keyword id="KW-0732">Signal</keyword>
<gene>
    <name evidence="1" type="primary">lptE</name>
    <name type="synonym">rlpB</name>
    <name type="ordered locus">Ecok1_05620</name>
    <name type="ORF">APECO1_1414</name>
</gene>
<name>LPTE_ECOK1</name>
<proteinExistence type="inferred from homology"/>
<feature type="signal peptide" evidence="1">
    <location>
        <begin position="1"/>
        <end position="18"/>
    </location>
</feature>
<feature type="chain" id="PRO_0000281178" description="LPS-assembly lipoprotein LptE">
    <location>
        <begin position="19"/>
        <end position="193"/>
    </location>
</feature>
<feature type="region of interest" description="Disordered" evidence="2">
    <location>
        <begin position="166"/>
        <end position="193"/>
    </location>
</feature>
<feature type="compositionally biased region" description="Low complexity" evidence="2">
    <location>
        <begin position="174"/>
        <end position="186"/>
    </location>
</feature>
<feature type="lipid moiety-binding region" description="N-palmitoyl cysteine" evidence="1">
    <location>
        <position position="19"/>
    </location>
</feature>
<feature type="lipid moiety-binding region" description="S-diacylglycerol cysteine" evidence="1">
    <location>
        <position position="19"/>
    </location>
</feature>
<sequence length="193" mass="21357">MRYLATLLLSLAVLITAGCGWHLRDTTQVPSTMKVMILDSGDPNGPLSRAVRNQLRLNGVELLDKETTRKDVPSLRLGKVSIAKDTASVFRNGQTAEYQMIMTVNATVLIPGRDIYPISAKVFRSFFDNPQMALAKDNEQDMIVKEMYDRAAEQLIRKLPSIRAADIRSDEEQTSTTTDTPATPARVSTTLGN</sequence>
<dbReference type="EMBL" id="CP000468">
    <property type="protein sequence ID" value="ABJ00056.1"/>
    <property type="molecule type" value="Genomic_DNA"/>
</dbReference>
<dbReference type="RefSeq" id="WP_001269673.1">
    <property type="nucleotide sequence ID" value="NZ_CADILS010000006.1"/>
</dbReference>
<dbReference type="SMR" id="A1A8R6"/>
<dbReference type="GeneID" id="93776841"/>
<dbReference type="KEGG" id="ecv:APECO1_1414"/>
<dbReference type="HOGENOM" id="CLU_103309_1_1_6"/>
<dbReference type="Proteomes" id="UP000008216">
    <property type="component" value="Chromosome"/>
</dbReference>
<dbReference type="GO" id="GO:0009279">
    <property type="term" value="C:cell outer membrane"/>
    <property type="evidence" value="ECO:0007669"/>
    <property type="project" value="UniProtKB-SubCell"/>
</dbReference>
<dbReference type="GO" id="GO:1990351">
    <property type="term" value="C:transporter complex"/>
    <property type="evidence" value="ECO:0007669"/>
    <property type="project" value="TreeGrafter"/>
</dbReference>
<dbReference type="GO" id="GO:0001530">
    <property type="term" value="F:lipopolysaccharide binding"/>
    <property type="evidence" value="ECO:0007669"/>
    <property type="project" value="TreeGrafter"/>
</dbReference>
<dbReference type="GO" id="GO:0043165">
    <property type="term" value="P:Gram-negative-bacterium-type cell outer membrane assembly"/>
    <property type="evidence" value="ECO:0007669"/>
    <property type="project" value="UniProtKB-UniRule"/>
</dbReference>
<dbReference type="GO" id="GO:0015920">
    <property type="term" value="P:lipopolysaccharide transport"/>
    <property type="evidence" value="ECO:0007669"/>
    <property type="project" value="TreeGrafter"/>
</dbReference>
<dbReference type="FunFam" id="3.30.160.150:FF:000001">
    <property type="entry name" value="LPS-assembly lipoprotein LptE"/>
    <property type="match status" value="1"/>
</dbReference>
<dbReference type="Gene3D" id="3.30.160.150">
    <property type="entry name" value="Lipoprotein like domain"/>
    <property type="match status" value="1"/>
</dbReference>
<dbReference type="HAMAP" id="MF_01186">
    <property type="entry name" value="LPS_assembly_LptE"/>
    <property type="match status" value="1"/>
</dbReference>
<dbReference type="InterPro" id="IPR007485">
    <property type="entry name" value="LPS_assembly_LptE"/>
</dbReference>
<dbReference type="NCBIfam" id="NF008062">
    <property type="entry name" value="PRK10796.1"/>
    <property type="match status" value="1"/>
</dbReference>
<dbReference type="PANTHER" id="PTHR38098">
    <property type="entry name" value="LPS-ASSEMBLY LIPOPROTEIN LPTE"/>
    <property type="match status" value="1"/>
</dbReference>
<dbReference type="PANTHER" id="PTHR38098:SF1">
    <property type="entry name" value="LPS-ASSEMBLY LIPOPROTEIN LPTE"/>
    <property type="match status" value="1"/>
</dbReference>
<dbReference type="Pfam" id="PF04390">
    <property type="entry name" value="LptE"/>
    <property type="match status" value="1"/>
</dbReference>
<dbReference type="PROSITE" id="PS51257">
    <property type="entry name" value="PROKAR_LIPOPROTEIN"/>
    <property type="match status" value="1"/>
</dbReference>
<reference key="1">
    <citation type="journal article" date="2007" name="J. Bacteriol.">
        <title>The genome sequence of avian pathogenic Escherichia coli strain O1:K1:H7 shares strong similarities with human extraintestinal pathogenic E. coli genomes.</title>
        <authorList>
            <person name="Johnson T.J."/>
            <person name="Kariyawasam S."/>
            <person name="Wannemuehler Y."/>
            <person name="Mangiamele P."/>
            <person name="Johnson S.J."/>
            <person name="Doetkott C."/>
            <person name="Skyberg J.A."/>
            <person name="Lynne A.M."/>
            <person name="Johnson J.R."/>
            <person name="Nolan L.K."/>
        </authorList>
    </citation>
    <scope>NUCLEOTIDE SEQUENCE [LARGE SCALE GENOMIC DNA]</scope>
</reference>
<organism>
    <name type="scientific">Escherichia coli O1:K1 / APEC</name>
    <dbReference type="NCBI Taxonomy" id="405955"/>
    <lineage>
        <taxon>Bacteria</taxon>
        <taxon>Pseudomonadati</taxon>
        <taxon>Pseudomonadota</taxon>
        <taxon>Gammaproteobacteria</taxon>
        <taxon>Enterobacterales</taxon>
        <taxon>Enterobacteriaceae</taxon>
        <taxon>Escherichia</taxon>
    </lineage>
</organism>
<evidence type="ECO:0000255" key="1">
    <source>
        <dbReference type="HAMAP-Rule" id="MF_01186"/>
    </source>
</evidence>
<evidence type="ECO:0000256" key="2">
    <source>
        <dbReference type="SAM" id="MobiDB-lite"/>
    </source>
</evidence>